<accession>Q0ABN3</accession>
<evidence type="ECO:0000255" key="1">
    <source>
        <dbReference type="HAMAP-Rule" id="MF_00049"/>
    </source>
</evidence>
<protein>
    <recommendedName>
        <fullName evidence="1">Leucine--tRNA ligase</fullName>
        <ecNumber evidence="1">6.1.1.4</ecNumber>
    </recommendedName>
    <alternativeName>
        <fullName evidence="1">Leucyl-tRNA synthetase</fullName>
        <shortName evidence="1">LeuRS</shortName>
    </alternativeName>
</protein>
<proteinExistence type="inferred from homology"/>
<dbReference type="EC" id="6.1.1.4" evidence="1"/>
<dbReference type="EMBL" id="CP000453">
    <property type="protein sequence ID" value="ABI55754.1"/>
    <property type="molecule type" value="Genomic_DNA"/>
</dbReference>
<dbReference type="RefSeq" id="WP_011628150.1">
    <property type="nucleotide sequence ID" value="NC_008340.1"/>
</dbReference>
<dbReference type="SMR" id="Q0ABN3"/>
<dbReference type="KEGG" id="aeh:Mlg_0400"/>
<dbReference type="eggNOG" id="COG0495">
    <property type="taxonomic scope" value="Bacteria"/>
</dbReference>
<dbReference type="HOGENOM" id="CLU_004427_0_0_6"/>
<dbReference type="OrthoDB" id="9810365at2"/>
<dbReference type="Proteomes" id="UP000001962">
    <property type="component" value="Chromosome"/>
</dbReference>
<dbReference type="GO" id="GO:0005829">
    <property type="term" value="C:cytosol"/>
    <property type="evidence" value="ECO:0007669"/>
    <property type="project" value="TreeGrafter"/>
</dbReference>
<dbReference type="GO" id="GO:0002161">
    <property type="term" value="F:aminoacyl-tRNA deacylase activity"/>
    <property type="evidence" value="ECO:0007669"/>
    <property type="project" value="InterPro"/>
</dbReference>
<dbReference type="GO" id="GO:0005524">
    <property type="term" value="F:ATP binding"/>
    <property type="evidence" value="ECO:0007669"/>
    <property type="project" value="UniProtKB-UniRule"/>
</dbReference>
<dbReference type="GO" id="GO:0004823">
    <property type="term" value="F:leucine-tRNA ligase activity"/>
    <property type="evidence" value="ECO:0007669"/>
    <property type="project" value="UniProtKB-UniRule"/>
</dbReference>
<dbReference type="GO" id="GO:0006429">
    <property type="term" value="P:leucyl-tRNA aminoacylation"/>
    <property type="evidence" value="ECO:0007669"/>
    <property type="project" value="UniProtKB-UniRule"/>
</dbReference>
<dbReference type="CDD" id="cd07958">
    <property type="entry name" value="Anticodon_Ia_Leu_BEm"/>
    <property type="match status" value="1"/>
</dbReference>
<dbReference type="CDD" id="cd00812">
    <property type="entry name" value="LeuRS_core"/>
    <property type="match status" value="1"/>
</dbReference>
<dbReference type="FunFam" id="2.20.28.290:FF:000001">
    <property type="entry name" value="Leucine--tRNA ligase"/>
    <property type="match status" value="1"/>
</dbReference>
<dbReference type="FunFam" id="3.10.20.590:FF:000001">
    <property type="entry name" value="Leucine--tRNA ligase"/>
    <property type="match status" value="1"/>
</dbReference>
<dbReference type="FunFam" id="3.40.50.620:FF:000124">
    <property type="entry name" value="Leucine--tRNA ligase"/>
    <property type="match status" value="1"/>
</dbReference>
<dbReference type="FunFam" id="3.40.50.620:FF:000395">
    <property type="entry name" value="Leucine--tRNA ligase"/>
    <property type="match status" value="1"/>
</dbReference>
<dbReference type="FunFam" id="3.90.740.10:FF:000012">
    <property type="entry name" value="Leucine--tRNA ligase"/>
    <property type="match status" value="1"/>
</dbReference>
<dbReference type="FunFam" id="1.10.730.10:FF:000011">
    <property type="entry name" value="Leucine--tRNA ligase chloroplastic/mitochondrial"/>
    <property type="match status" value="1"/>
</dbReference>
<dbReference type="Gene3D" id="2.20.28.290">
    <property type="match status" value="1"/>
</dbReference>
<dbReference type="Gene3D" id="3.10.20.590">
    <property type="match status" value="1"/>
</dbReference>
<dbReference type="Gene3D" id="3.40.50.620">
    <property type="entry name" value="HUPs"/>
    <property type="match status" value="2"/>
</dbReference>
<dbReference type="Gene3D" id="1.10.730.10">
    <property type="entry name" value="Isoleucyl-tRNA Synthetase, Domain 1"/>
    <property type="match status" value="1"/>
</dbReference>
<dbReference type="Gene3D" id="3.90.740.10">
    <property type="entry name" value="Valyl/Leucyl/Isoleucyl-tRNA synthetase, editing domain"/>
    <property type="match status" value="1"/>
</dbReference>
<dbReference type="HAMAP" id="MF_00049_B">
    <property type="entry name" value="Leu_tRNA_synth_B"/>
    <property type="match status" value="1"/>
</dbReference>
<dbReference type="InterPro" id="IPR001412">
    <property type="entry name" value="aa-tRNA-synth_I_CS"/>
</dbReference>
<dbReference type="InterPro" id="IPR002300">
    <property type="entry name" value="aa-tRNA-synth_Ia"/>
</dbReference>
<dbReference type="InterPro" id="IPR002302">
    <property type="entry name" value="Leu-tRNA-ligase"/>
</dbReference>
<dbReference type="InterPro" id="IPR025709">
    <property type="entry name" value="Leu_tRNA-synth_edit"/>
</dbReference>
<dbReference type="InterPro" id="IPR013155">
    <property type="entry name" value="M/V/L/I-tRNA-synth_anticd-bd"/>
</dbReference>
<dbReference type="InterPro" id="IPR015413">
    <property type="entry name" value="Methionyl/Leucyl_tRNA_Synth"/>
</dbReference>
<dbReference type="InterPro" id="IPR014729">
    <property type="entry name" value="Rossmann-like_a/b/a_fold"/>
</dbReference>
<dbReference type="InterPro" id="IPR009080">
    <property type="entry name" value="tRNAsynth_Ia_anticodon-bd"/>
</dbReference>
<dbReference type="InterPro" id="IPR009008">
    <property type="entry name" value="Val/Leu/Ile-tRNA-synth_edit"/>
</dbReference>
<dbReference type="NCBIfam" id="TIGR00396">
    <property type="entry name" value="leuS_bact"/>
    <property type="match status" value="1"/>
</dbReference>
<dbReference type="PANTHER" id="PTHR43740:SF2">
    <property type="entry name" value="LEUCINE--TRNA LIGASE, MITOCHONDRIAL"/>
    <property type="match status" value="1"/>
</dbReference>
<dbReference type="PANTHER" id="PTHR43740">
    <property type="entry name" value="LEUCYL-TRNA SYNTHETASE"/>
    <property type="match status" value="1"/>
</dbReference>
<dbReference type="Pfam" id="PF08264">
    <property type="entry name" value="Anticodon_1"/>
    <property type="match status" value="1"/>
</dbReference>
<dbReference type="Pfam" id="PF00133">
    <property type="entry name" value="tRNA-synt_1"/>
    <property type="match status" value="2"/>
</dbReference>
<dbReference type="Pfam" id="PF13603">
    <property type="entry name" value="tRNA-synt_1_2"/>
    <property type="match status" value="1"/>
</dbReference>
<dbReference type="Pfam" id="PF09334">
    <property type="entry name" value="tRNA-synt_1g"/>
    <property type="match status" value="1"/>
</dbReference>
<dbReference type="PRINTS" id="PR00985">
    <property type="entry name" value="TRNASYNTHLEU"/>
</dbReference>
<dbReference type="SUPFAM" id="SSF47323">
    <property type="entry name" value="Anticodon-binding domain of a subclass of class I aminoacyl-tRNA synthetases"/>
    <property type="match status" value="1"/>
</dbReference>
<dbReference type="SUPFAM" id="SSF52374">
    <property type="entry name" value="Nucleotidylyl transferase"/>
    <property type="match status" value="1"/>
</dbReference>
<dbReference type="SUPFAM" id="SSF50677">
    <property type="entry name" value="ValRS/IleRS/LeuRS editing domain"/>
    <property type="match status" value="1"/>
</dbReference>
<dbReference type="PROSITE" id="PS00178">
    <property type="entry name" value="AA_TRNA_LIGASE_I"/>
    <property type="match status" value="1"/>
</dbReference>
<name>SYL_ALKEH</name>
<sequence>MDASYQPEQIEAQAQRYWDEQQSFAAREEREGEKFYCLSMFPYPSGRLHMGHVRNYTIGDVISRYQRMQGRNVLQPMGWDAFGLPAENAAMKHGVPPARWTRENIETMRGQLQRLGFAYDWDREFATCDPEYYRWEQWLFTRLYKKGLVYKKTATVNWDPVDQTVLANEQVVDGRGWRSGAVVERRDIPQWFLRITDYADELLEALDELPGWPEQVRAMQRNWIGRSEGVELDFAVAGHSDTLRVYTTRPDTLYGVTYVGLAPEHPLAAEAAEGNPEMQRFIEDCRKGGVAEADIATMEKRGMDTGLKAVHPLTGEQVPIWVANFVLMEYGHGAVMAVPAHDQRDWEFASKYGLDIRPVVHPSAEERADVSEGAFTDDGVLADSGEFSGLPSAEARQAIGEKLEGLGKGERTVNYRLRDWGISRQRYWGAPIPMIQCPACGDVPVPDEDLPVVLPEDVDVTGGGSPLKDLPAFYQTTCPQCGGEARRETDTFDTFMESSWYYARFACADQKGAMLDERADQWLPVDQYIGGIEHAILHLLYARFFHKLMRDEGLLQSDEPFRNLLTQGMVIAETYYRERGDGGKDWYNPAEVTVQRDERGRPVSAVLEDDGEPVVMGAIEKMSKSKNNGVDPQALIDRYGADTVRLYTMFAAPPDQSLEWSDSAVEGAYRFLRRYYGLVRDHVAAGPVPALDVASLDDAARDLRRKVHETIAKASDDVGRRYTFNTAIAAVMELCNALGKAAANEPSGAARAVLQEGLEAATLILAPIAPHVTHVCWQALGHDEAVIDARWPAVDESALTRDTIELVVQVNGKLRSRLQLPADADKAAAEAAALADEKVQRFTEGKTVRKVIVVPGKLVNIVAN</sequence>
<comment type="catalytic activity">
    <reaction evidence="1">
        <text>tRNA(Leu) + L-leucine + ATP = L-leucyl-tRNA(Leu) + AMP + diphosphate</text>
        <dbReference type="Rhea" id="RHEA:11688"/>
        <dbReference type="Rhea" id="RHEA-COMP:9613"/>
        <dbReference type="Rhea" id="RHEA-COMP:9622"/>
        <dbReference type="ChEBI" id="CHEBI:30616"/>
        <dbReference type="ChEBI" id="CHEBI:33019"/>
        <dbReference type="ChEBI" id="CHEBI:57427"/>
        <dbReference type="ChEBI" id="CHEBI:78442"/>
        <dbReference type="ChEBI" id="CHEBI:78494"/>
        <dbReference type="ChEBI" id="CHEBI:456215"/>
        <dbReference type="EC" id="6.1.1.4"/>
    </reaction>
</comment>
<comment type="subcellular location">
    <subcellularLocation>
        <location evidence="1">Cytoplasm</location>
    </subcellularLocation>
</comment>
<comment type="similarity">
    <text evidence="1">Belongs to the class-I aminoacyl-tRNA synthetase family.</text>
</comment>
<reference key="1">
    <citation type="submission" date="2006-08" db="EMBL/GenBank/DDBJ databases">
        <title>Complete sequence of Alkalilimnicola ehrilichei MLHE-1.</title>
        <authorList>
            <person name="Copeland A."/>
            <person name="Lucas S."/>
            <person name="Lapidus A."/>
            <person name="Barry K."/>
            <person name="Detter J.C."/>
            <person name="Glavina del Rio T."/>
            <person name="Hammon N."/>
            <person name="Israni S."/>
            <person name="Dalin E."/>
            <person name="Tice H."/>
            <person name="Pitluck S."/>
            <person name="Sims D."/>
            <person name="Brettin T."/>
            <person name="Bruce D."/>
            <person name="Han C."/>
            <person name="Tapia R."/>
            <person name="Gilna P."/>
            <person name="Schmutz J."/>
            <person name="Larimer F."/>
            <person name="Land M."/>
            <person name="Hauser L."/>
            <person name="Kyrpides N."/>
            <person name="Mikhailova N."/>
            <person name="Oremland R.S."/>
            <person name="Hoeft S.E."/>
            <person name="Switzer-Blum J."/>
            <person name="Kulp T."/>
            <person name="King G."/>
            <person name="Tabita R."/>
            <person name="Witte B."/>
            <person name="Santini J.M."/>
            <person name="Basu P."/>
            <person name="Hollibaugh J.T."/>
            <person name="Xie G."/>
            <person name="Stolz J.F."/>
            <person name="Richardson P."/>
        </authorList>
    </citation>
    <scope>NUCLEOTIDE SEQUENCE [LARGE SCALE GENOMIC DNA]</scope>
    <source>
        <strain>ATCC BAA-1101 / DSM 17681 / MLHE-1</strain>
    </source>
</reference>
<keyword id="KW-0030">Aminoacyl-tRNA synthetase</keyword>
<keyword id="KW-0067">ATP-binding</keyword>
<keyword id="KW-0963">Cytoplasm</keyword>
<keyword id="KW-0436">Ligase</keyword>
<keyword id="KW-0547">Nucleotide-binding</keyword>
<keyword id="KW-0648">Protein biosynthesis</keyword>
<keyword id="KW-1185">Reference proteome</keyword>
<organism>
    <name type="scientific">Alkalilimnicola ehrlichii (strain ATCC BAA-1101 / DSM 17681 / MLHE-1)</name>
    <dbReference type="NCBI Taxonomy" id="187272"/>
    <lineage>
        <taxon>Bacteria</taxon>
        <taxon>Pseudomonadati</taxon>
        <taxon>Pseudomonadota</taxon>
        <taxon>Gammaproteobacteria</taxon>
        <taxon>Chromatiales</taxon>
        <taxon>Ectothiorhodospiraceae</taxon>
        <taxon>Alkalilimnicola</taxon>
    </lineage>
</organism>
<feature type="chain" id="PRO_1000009288" description="Leucine--tRNA ligase">
    <location>
        <begin position="1"/>
        <end position="864"/>
    </location>
</feature>
<feature type="short sequence motif" description="'HIGH' region">
    <location>
        <begin position="42"/>
        <end position="52"/>
    </location>
</feature>
<feature type="short sequence motif" description="'KMSKS' region">
    <location>
        <begin position="621"/>
        <end position="625"/>
    </location>
</feature>
<feature type="binding site" evidence="1">
    <location>
        <position position="624"/>
    </location>
    <ligand>
        <name>ATP</name>
        <dbReference type="ChEBI" id="CHEBI:30616"/>
    </ligand>
</feature>
<gene>
    <name evidence="1" type="primary">leuS</name>
    <name type="ordered locus">Mlg_0400</name>
</gene>